<sequence length="157" mass="16235">MAISFRPTADLVDDIGPDVRSCDLQFRQFGGRSQFAGPISTVRCFQDNALLKSVLSQPSAGGVLVIDGAGSLHTALVGDVIAELARSTGWTGLIVHGAVRDAAALRGIDIGIKALGTNPRKSTKTGAGERDVEITLGGVTFVPGDIAYSDDDGIIVV</sequence>
<feature type="chain" id="PRO_0000209620" description="Putative 4-hydroxy-4-methyl-2-oxoglutarate aldolase">
    <location>
        <begin position="1"/>
        <end position="157"/>
    </location>
</feature>
<feature type="binding site" evidence="1">
    <location>
        <begin position="78"/>
        <end position="81"/>
    </location>
    <ligand>
        <name>substrate</name>
    </ligand>
</feature>
<feature type="binding site" evidence="1">
    <location>
        <position position="100"/>
    </location>
    <ligand>
        <name>substrate</name>
    </ligand>
</feature>
<feature type="binding site" evidence="1">
    <location>
        <position position="101"/>
    </location>
    <ligand>
        <name>a divalent metal cation</name>
        <dbReference type="ChEBI" id="CHEBI:60240"/>
    </ligand>
</feature>
<comment type="function">
    <text evidence="1">Catalyzes the aldol cleavage of 4-hydroxy-4-methyl-2-oxoglutarate (HMG) into 2 molecules of pyruvate. Also contains a secondary oxaloacetate (OAA) decarboxylase activity due to the common pyruvate enolate transition state formed following C-C bond cleavage in the retro-aldol and decarboxylation reactions (By similarity).</text>
</comment>
<comment type="catalytic activity">
    <reaction>
        <text>4-hydroxy-4-methyl-2-oxoglutarate = 2 pyruvate</text>
        <dbReference type="Rhea" id="RHEA:22748"/>
        <dbReference type="ChEBI" id="CHEBI:15361"/>
        <dbReference type="ChEBI" id="CHEBI:58276"/>
        <dbReference type="EC" id="4.1.3.17"/>
    </reaction>
</comment>
<comment type="catalytic activity">
    <reaction>
        <text>oxaloacetate + H(+) = pyruvate + CO2</text>
        <dbReference type="Rhea" id="RHEA:15641"/>
        <dbReference type="ChEBI" id="CHEBI:15361"/>
        <dbReference type="ChEBI" id="CHEBI:15378"/>
        <dbReference type="ChEBI" id="CHEBI:16452"/>
        <dbReference type="ChEBI" id="CHEBI:16526"/>
        <dbReference type="EC" id="4.1.1.112"/>
    </reaction>
</comment>
<comment type="cofactor">
    <cofactor evidence="1">
        <name>a divalent metal cation</name>
        <dbReference type="ChEBI" id="CHEBI:60240"/>
    </cofactor>
    <text evidence="1">Divalent metal cation.</text>
</comment>
<comment type="subunit">
    <text evidence="1">Homotrimer.</text>
</comment>
<comment type="similarity">
    <text evidence="2">Belongs to the class II aldolase/RraA-like family.</text>
</comment>
<accession>P0A667</accession>
<accession>A0A1R3Y6X0</accession>
<accession>P96224</accession>
<accession>X2BPY0</accession>
<name>RRAAH_MYCBO</name>
<evidence type="ECO:0000250" key="1"/>
<evidence type="ECO:0000305" key="2"/>
<proteinExistence type="inferred from homology"/>
<dbReference type="EC" id="4.1.3.17"/>
<dbReference type="EC" id="4.1.1.112"/>
<dbReference type="EMBL" id="LT708304">
    <property type="protein sequence ID" value="SIU02515.1"/>
    <property type="molecule type" value="Genomic_DNA"/>
</dbReference>
<dbReference type="RefSeq" id="NP_857520.1">
    <property type="nucleotide sequence ID" value="NC_002945.3"/>
</dbReference>
<dbReference type="SMR" id="P0A667"/>
<dbReference type="KEGG" id="mbo:BQ2027_MB3883"/>
<dbReference type="PATRIC" id="fig|233413.5.peg.4254"/>
<dbReference type="Proteomes" id="UP000001419">
    <property type="component" value="Chromosome"/>
</dbReference>
<dbReference type="GO" id="GO:0047443">
    <property type="term" value="F:4-hydroxy-4-methyl-2-oxoglutarate aldolase activity"/>
    <property type="evidence" value="ECO:0007669"/>
    <property type="project" value="UniProtKB-EC"/>
</dbReference>
<dbReference type="GO" id="GO:0046872">
    <property type="term" value="F:metal ion binding"/>
    <property type="evidence" value="ECO:0007669"/>
    <property type="project" value="UniProtKB-KW"/>
</dbReference>
<dbReference type="GO" id="GO:0008948">
    <property type="term" value="F:oxaloacetate decarboxylase activity"/>
    <property type="evidence" value="ECO:0007669"/>
    <property type="project" value="UniProtKB-EC"/>
</dbReference>
<dbReference type="GO" id="GO:0008428">
    <property type="term" value="F:ribonuclease inhibitor activity"/>
    <property type="evidence" value="ECO:0007669"/>
    <property type="project" value="InterPro"/>
</dbReference>
<dbReference type="GO" id="GO:0051252">
    <property type="term" value="P:regulation of RNA metabolic process"/>
    <property type="evidence" value="ECO:0007669"/>
    <property type="project" value="InterPro"/>
</dbReference>
<dbReference type="CDD" id="cd16841">
    <property type="entry name" value="RraA_family"/>
    <property type="match status" value="1"/>
</dbReference>
<dbReference type="Gene3D" id="3.50.30.40">
    <property type="entry name" value="Ribonuclease E inhibitor RraA/RraA-like"/>
    <property type="match status" value="1"/>
</dbReference>
<dbReference type="InterPro" id="IPR010203">
    <property type="entry name" value="RraA"/>
</dbReference>
<dbReference type="InterPro" id="IPR005493">
    <property type="entry name" value="RraA/RraA-like"/>
</dbReference>
<dbReference type="InterPro" id="IPR036704">
    <property type="entry name" value="RraA/RraA-like_sf"/>
</dbReference>
<dbReference type="NCBIfam" id="TIGR01935">
    <property type="entry name" value="NOT-MenG"/>
    <property type="match status" value="1"/>
</dbReference>
<dbReference type="NCBIfam" id="NF006875">
    <property type="entry name" value="PRK09372.1"/>
    <property type="match status" value="1"/>
</dbReference>
<dbReference type="PANTHER" id="PTHR33254">
    <property type="entry name" value="4-HYDROXY-4-METHYL-2-OXOGLUTARATE ALDOLASE 3-RELATED"/>
    <property type="match status" value="1"/>
</dbReference>
<dbReference type="PANTHER" id="PTHR33254:SF4">
    <property type="entry name" value="4-HYDROXY-4-METHYL-2-OXOGLUTARATE ALDOLASE 3-RELATED"/>
    <property type="match status" value="1"/>
</dbReference>
<dbReference type="Pfam" id="PF03737">
    <property type="entry name" value="RraA-like"/>
    <property type="match status" value="1"/>
</dbReference>
<dbReference type="SUPFAM" id="SSF89562">
    <property type="entry name" value="RraA-like"/>
    <property type="match status" value="1"/>
</dbReference>
<protein>
    <recommendedName>
        <fullName>Putative 4-hydroxy-4-methyl-2-oxoglutarate aldolase</fullName>
        <shortName>HMG aldolase</shortName>
        <ecNumber>4.1.3.17</ecNumber>
    </recommendedName>
    <alternativeName>
        <fullName>Oxaloacetate decarboxylase</fullName>
        <shortName>OAA decarboxylase</shortName>
        <ecNumber>4.1.1.112</ecNumber>
    </alternativeName>
    <alternativeName>
        <fullName>Regulator of ribonuclease activity homolog</fullName>
    </alternativeName>
    <alternativeName>
        <fullName>RraA-like protein</fullName>
    </alternativeName>
</protein>
<keyword id="KW-0456">Lyase</keyword>
<keyword id="KW-0479">Metal-binding</keyword>
<keyword id="KW-1185">Reference proteome</keyword>
<organism>
    <name type="scientific">Mycobacterium bovis (strain ATCC BAA-935 / AF2122/97)</name>
    <dbReference type="NCBI Taxonomy" id="233413"/>
    <lineage>
        <taxon>Bacteria</taxon>
        <taxon>Bacillati</taxon>
        <taxon>Actinomycetota</taxon>
        <taxon>Actinomycetes</taxon>
        <taxon>Mycobacteriales</taxon>
        <taxon>Mycobacteriaceae</taxon>
        <taxon>Mycobacterium</taxon>
        <taxon>Mycobacterium tuberculosis complex</taxon>
    </lineage>
</organism>
<reference key="1">
    <citation type="journal article" date="2003" name="Proc. Natl. Acad. Sci. U.S.A.">
        <title>The complete genome sequence of Mycobacterium bovis.</title>
        <authorList>
            <person name="Garnier T."/>
            <person name="Eiglmeier K."/>
            <person name="Camus J.-C."/>
            <person name="Medina N."/>
            <person name="Mansoor H."/>
            <person name="Pryor M."/>
            <person name="Duthoy S."/>
            <person name="Grondin S."/>
            <person name="Lacroix C."/>
            <person name="Monsempe C."/>
            <person name="Simon S."/>
            <person name="Harris B."/>
            <person name="Atkin R."/>
            <person name="Doggett J."/>
            <person name="Mayes R."/>
            <person name="Keating L."/>
            <person name="Wheeler P.R."/>
            <person name="Parkhill J."/>
            <person name="Barrell B.G."/>
            <person name="Cole S.T."/>
            <person name="Gordon S.V."/>
            <person name="Hewinson R.G."/>
        </authorList>
    </citation>
    <scope>NUCLEOTIDE SEQUENCE [LARGE SCALE GENOMIC DNA]</scope>
    <source>
        <strain>ATCC BAA-935 / AF2122/97</strain>
    </source>
</reference>
<reference key="2">
    <citation type="journal article" date="2017" name="Genome Announc.">
        <title>Updated reference genome sequence and annotation of Mycobacterium bovis AF2122/97.</title>
        <authorList>
            <person name="Malone K.M."/>
            <person name="Farrell D."/>
            <person name="Stuber T.P."/>
            <person name="Schubert O.T."/>
            <person name="Aebersold R."/>
            <person name="Robbe-Austerman S."/>
            <person name="Gordon S.V."/>
        </authorList>
    </citation>
    <scope>NUCLEOTIDE SEQUENCE [LARGE SCALE GENOMIC DNA]</scope>
    <scope>GENOME REANNOTATION</scope>
    <source>
        <strain>ATCC BAA-935 / AF2122/97</strain>
    </source>
</reference>
<gene>
    <name type="ordered locus">BQ2027_MB3883</name>
</gene>